<comment type="function">
    <text evidence="3">Catalyzes the second step in the shikimate pathway.</text>
</comment>
<comment type="catalytic activity">
    <reaction evidence="3">
        <text>7-phospho-2-dehydro-3-deoxy-D-arabino-heptonate = 3-dehydroquinate + phosphate</text>
        <dbReference type="Rhea" id="RHEA:21968"/>
        <dbReference type="ChEBI" id="CHEBI:32364"/>
        <dbReference type="ChEBI" id="CHEBI:43474"/>
        <dbReference type="ChEBI" id="CHEBI:58394"/>
        <dbReference type="EC" id="4.2.3.4"/>
    </reaction>
</comment>
<comment type="cofactor">
    <cofactor evidence="3">
        <name>a divalent metal cation</name>
        <dbReference type="ChEBI" id="CHEBI:60240"/>
    </cofactor>
</comment>
<comment type="cofactor">
    <cofactor evidence="3">
        <name>NAD(+)</name>
        <dbReference type="ChEBI" id="CHEBI:57540"/>
    </cofactor>
</comment>
<comment type="biophysicochemical properties">
    <kinetics>
        <KM evidence="3">1.3 uM for 3-deoxy-D-arabino-hept-2-ulosonate 7-phosphate (at pH 7.5 and 25 degrees Celsius)</KM>
        <text>kcat is 20.1 sec(-1).</text>
    </kinetics>
    <phDependence>
        <text evidence="3">Optimum pH is 7.5.</text>
    </phDependence>
    <temperatureDependence>
        <text evidence="3">Optimum temperature is 55 degrees Celsius.</text>
    </temperatureDependence>
</comment>
<comment type="pathway">
    <text>Metabolic intermediate biosynthesis; chorismate biosynthesis; chorismate from D-erythrose 4-phosphate and phosphoenolpyruvate: step 2/7.</text>
</comment>
<comment type="subunit">
    <text evidence="3">Homodimer.</text>
</comment>
<comment type="subcellular location">
    <subcellularLocation>
        <location evidence="4">Plastid</location>
        <location evidence="4">Chloroplast</location>
    </subcellularLocation>
</comment>
<comment type="similarity">
    <text evidence="4">Belongs to the sugar phosphate cyclases superfamily. Dehydroquinate synthase family.</text>
</comment>
<evidence type="ECO:0000250" key="1"/>
<evidence type="ECO:0000255" key="2"/>
<evidence type="ECO:0000269" key="3">
    <source>
    </source>
</evidence>
<evidence type="ECO:0000305" key="4"/>
<evidence type="ECO:0000312" key="5">
    <source>
        <dbReference type="EMBL" id="PSS00459.1"/>
    </source>
</evidence>
<evidence type="ECO:0007744" key="6">
    <source>
        <dbReference type="PDB" id="3ZOK"/>
    </source>
</evidence>
<evidence type="ECO:0007829" key="7">
    <source>
        <dbReference type="PDB" id="3ZOK"/>
    </source>
</evidence>
<accession>U3KRF2</accession>
<accession>A0A2R6Q234</accession>
<name>DHQS_ACTCC</name>
<dbReference type="EC" id="4.2.3.4"/>
<dbReference type="EMBL" id="NKQK01000021">
    <property type="protein sequence ID" value="PSS00459.1"/>
    <property type="molecule type" value="Genomic_DNA"/>
</dbReference>
<dbReference type="PDB" id="3ZOK">
    <property type="method" value="X-ray"/>
    <property type="resolution" value="2.40 A"/>
    <property type="chains" value="A/B/C/D=69-445"/>
</dbReference>
<dbReference type="PDBsum" id="3ZOK"/>
<dbReference type="SMR" id="U3KRF2"/>
<dbReference type="FunCoup" id="U3KRF2">
    <property type="interactions" value="1776"/>
</dbReference>
<dbReference type="STRING" id="1590841.U3KRF2"/>
<dbReference type="EnsemblPlants" id="PSS00459">
    <property type="protein sequence ID" value="PSS00459"/>
    <property type="gene ID" value="CEY00_Acc24429"/>
</dbReference>
<dbReference type="Gramene" id="PSS00459">
    <property type="protein sequence ID" value="PSS00459"/>
    <property type="gene ID" value="CEY00_Acc24429"/>
</dbReference>
<dbReference type="InParanoid" id="U3KRF2"/>
<dbReference type="OMA" id="IAIGMRM"/>
<dbReference type="OrthoDB" id="197068at2759"/>
<dbReference type="SABIO-RK" id="U3KRF2"/>
<dbReference type="UniPathway" id="UPA00053">
    <property type="reaction ID" value="UER00085"/>
</dbReference>
<dbReference type="EvolutionaryTrace" id="U3KRF2"/>
<dbReference type="Proteomes" id="UP000241394">
    <property type="component" value="Chromosome LG21"/>
</dbReference>
<dbReference type="GO" id="GO:0009507">
    <property type="term" value="C:chloroplast"/>
    <property type="evidence" value="ECO:0007669"/>
    <property type="project" value="UniProtKB-SubCell"/>
</dbReference>
<dbReference type="GO" id="GO:0003856">
    <property type="term" value="F:3-dehydroquinate synthase activity"/>
    <property type="evidence" value="ECO:0000314"/>
    <property type="project" value="UniProtKB"/>
</dbReference>
<dbReference type="GO" id="GO:0042802">
    <property type="term" value="F:identical protein binding"/>
    <property type="evidence" value="ECO:0000314"/>
    <property type="project" value="UniProtKB"/>
</dbReference>
<dbReference type="GO" id="GO:0046872">
    <property type="term" value="F:metal ion binding"/>
    <property type="evidence" value="ECO:0000314"/>
    <property type="project" value="UniProtKB"/>
</dbReference>
<dbReference type="GO" id="GO:0051287">
    <property type="term" value="F:NAD binding"/>
    <property type="evidence" value="ECO:0000314"/>
    <property type="project" value="UniProtKB"/>
</dbReference>
<dbReference type="GO" id="GO:0008652">
    <property type="term" value="P:amino acid biosynthetic process"/>
    <property type="evidence" value="ECO:0007669"/>
    <property type="project" value="UniProtKB-KW"/>
</dbReference>
<dbReference type="GO" id="GO:0009073">
    <property type="term" value="P:aromatic amino acid family biosynthetic process"/>
    <property type="evidence" value="ECO:0007669"/>
    <property type="project" value="UniProtKB-KW"/>
</dbReference>
<dbReference type="GO" id="GO:0009423">
    <property type="term" value="P:chorismate biosynthetic process"/>
    <property type="evidence" value="ECO:0000314"/>
    <property type="project" value="UniProtKB"/>
</dbReference>
<dbReference type="CDD" id="cd08195">
    <property type="entry name" value="DHQS"/>
    <property type="match status" value="1"/>
</dbReference>
<dbReference type="FunFam" id="1.20.1090.10:FF:000002">
    <property type="entry name" value="3-dehydroquinate synthase"/>
    <property type="match status" value="1"/>
</dbReference>
<dbReference type="FunFam" id="3.40.50.1970:FF:000001">
    <property type="entry name" value="3-dehydroquinate synthase"/>
    <property type="match status" value="1"/>
</dbReference>
<dbReference type="Gene3D" id="3.40.50.1970">
    <property type="match status" value="1"/>
</dbReference>
<dbReference type="Gene3D" id="1.20.1090.10">
    <property type="entry name" value="Dehydroquinate synthase-like - alpha domain"/>
    <property type="match status" value="1"/>
</dbReference>
<dbReference type="HAMAP" id="MF_00110">
    <property type="entry name" value="DHQ_synthase"/>
    <property type="match status" value="1"/>
</dbReference>
<dbReference type="InterPro" id="IPR050071">
    <property type="entry name" value="Dehydroquinate_synthase"/>
</dbReference>
<dbReference type="InterPro" id="IPR016037">
    <property type="entry name" value="DHQ_synth_AroB"/>
</dbReference>
<dbReference type="InterPro" id="IPR030960">
    <property type="entry name" value="DHQS/DOIS_N"/>
</dbReference>
<dbReference type="InterPro" id="IPR056179">
    <property type="entry name" value="DHQS_C"/>
</dbReference>
<dbReference type="NCBIfam" id="TIGR01357">
    <property type="entry name" value="aroB"/>
    <property type="match status" value="1"/>
</dbReference>
<dbReference type="PANTHER" id="PTHR43622">
    <property type="entry name" value="3-DEHYDROQUINATE SYNTHASE"/>
    <property type="match status" value="1"/>
</dbReference>
<dbReference type="PANTHER" id="PTHR43622:SF7">
    <property type="entry name" value="3-DEHYDROQUINATE SYNTHASE, CHLOROPLASTIC"/>
    <property type="match status" value="1"/>
</dbReference>
<dbReference type="Pfam" id="PF01761">
    <property type="entry name" value="DHQ_synthase"/>
    <property type="match status" value="1"/>
</dbReference>
<dbReference type="Pfam" id="PF24621">
    <property type="entry name" value="DHQS_C"/>
    <property type="match status" value="1"/>
</dbReference>
<dbReference type="SUPFAM" id="SSF56796">
    <property type="entry name" value="Dehydroquinate synthase-like"/>
    <property type="match status" value="1"/>
</dbReference>
<gene>
    <name type="primary">DHQS</name>
    <name type="synonym">AROB</name>
    <name evidence="5" type="ORF">CEY00_Acc24429</name>
</gene>
<keyword id="KW-0002">3D-structure</keyword>
<keyword id="KW-0028">Amino-acid biosynthesis</keyword>
<keyword id="KW-0057">Aromatic amino acid biosynthesis</keyword>
<keyword id="KW-0150">Chloroplast</keyword>
<keyword id="KW-0456">Lyase</keyword>
<keyword id="KW-0479">Metal-binding</keyword>
<keyword id="KW-0520">NAD</keyword>
<keyword id="KW-0934">Plastid</keyword>
<keyword id="KW-1185">Reference proteome</keyword>
<keyword id="KW-0809">Transit peptide</keyword>
<organism>
    <name type="scientific">Actinidia chinensis var. chinensis</name>
    <name type="common">Chinese soft-hair kiwi</name>
    <dbReference type="NCBI Taxonomy" id="1590841"/>
    <lineage>
        <taxon>Eukaryota</taxon>
        <taxon>Viridiplantae</taxon>
        <taxon>Streptophyta</taxon>
        <taxon>Embryophyta</taxon>
        <taxon>Tracheophyta</taxon>
        <taxon>Spermatophyta</taxon>
        <taxon>Magnoliopsida</taxon>
        <taxon>eudicotyledons</taxon>
        <taxon>Gunneridae</taxon>
        <taxon>Pentapetalae</taxon>
        <taxon>asterids</taxon>
        <taxon>Ericales</taxon>
        <taxon>Actinidiaceae</taxon>
        <taxon>Actinidia</taxon>
    </lineage>
</organism>
<reference key="1">
    <citation type="journal article" date="2013" name="Arch. Biochem. Biophys.">
        <title>Biochemical and structural characterisation of dehydroquinate synthase from the New Zealand kiwifruit Actinidia chinensis.</title>
        <authorList>
            <person name="Mittelstadt G."/>
            <person name="Negron L."/>
            <person name="Schofield L.R."/>
            <person name="Marsh K."/>
            <person name="Parker E.J."/>
        </authorList>
    </citation>
    <scope>NUCLEOTIDE SEQUENCE [MRNA]</scope>
    <scope>X-RAY CRYSTALLOGRAPHY (2.40 ANGSTROMS) OF 69-445 IN COMPLEX WITH NAD</scope>
    <scope>FUNCTION</scope>
    <scope>CATALYTIC ACTIVITY</scope>
    <scope>COFACTOR</scope>
    <scope>BIOPHYSICOCHEMICAL PROPERTIES</scope>
    <scope>SUBUNIT</scope>
</reference>
<reference key="2">
    <citation type="journal article" date="2018" name="BMC Genomics">
        <title>A manually annotated Actinidia chinensis var. chinensis (kiwifruit) genome highlights the challenges associated with draft genomes and gene prediction in plants.</title>
        <authorList>
            <person name="Pilkington S.M."/>
            <person name="Crowhurst R."/>
            <person name="Hilario E."/>
            <person name="Nardozza S."/>
            <person name="Fraser L."/>
            <person name="Peng Y."/>
            <person name="Gunaseelan K."/>
            <person name="Simpson R."/>
            <person name="Tahir J."/>
            <person name="Deroles S.C."/>
            <person name="Templeton K."/>
            <person name="Luo Z."/>
            <person name="Davy M."/>
            <person name="Cheng C."/>
            <person name="McNeilage M."/>
            <person name="Scaglione D."/>
            <person name="Liu Y."/>
            <person name="Zhang Q."/>
            <person name="Datson P."/>
            <person name="De Silva N."/>
            <person name="Gardiner S.E."/>
            <person name="Bassett H."/>
            <person name="Chagne D."/>
            <person name="McCallum J."/>
            <person name="Dzierzon H."/>
            <person name="Deng C."/>
            <person name="Wang Y.Y."/>
            <person name="Barron L."/>
            <person name="Manako K."/>
            <person name="Bowen J."/>
            <person name="Foster T.M."/>
            <person name="Erridge Z.A."/>
            <person name="Tiffin H."/>
            <person name="Waite C.N."/>
            <person name="Davies K.M."/>
            <person name="Grierson E.P."/>
            <person name="Laing W.A."/>
            <person name="Kirk R."/>
            <person name="Chen X."/>
            <person name="Wood M."/>
            <person name="Montefiori M."/>
            <person name="Brummell D.A."/>
            <person name="Schwinn K.E."/>
            <person name="Catanach A."/>
            <person name="Fullerton C."/>
            <person name="Li D."/>
            <person name="Meiyalaghan S."/>
            <person name="Nieuwenhuizen N."/>
            <person name="Read N."/>
            <person name="Prakash R."/>
            <person name="Hunter D."/>
            <person name="Zhang H."/>
            <person name="McKenzie M."/>
            <person name="Knabel M."/>
            <person name="Harris A."/>
            <person name="Allan A.C."/>
            <person name="Gleave A."/>
            <person name="Chen A."/>
            <person name="Janssen B.J."/>
            <person name="Plunkett B."/>
            <person name="Ampomah-Dwamena C."/>
            <person name="Voogd C."/>
            <person name="Leif D."/>
            <person name="Lafferty D."/>
            <person name="Souleyre E.J.F."/>
            <person name="Varkonyi-Gasic E."/>
            <person name="Gambi F."/>
            <person name="Hanley J."/>
            <person name="Yao J.L."/>
            <person name="Cheung J."/>
            <person name="David K.M."/>
            <person name="Warren B."/>
            <person name="Marsh K."/>
            <person name="Snowden K.C."/>
            <person name="Lin-Wang K."/>
            <person name="Brian L."/>
            <person name="Martinez-Sanchez M."/>
            <person name="Wang M."/>
            <person name="Ileperuma N."/>
            <person name="Macnee N."/>
            <person name="Campin R."/>
            <person name="McAtee P."/>
            <person name="Drummond R.S.M."/>
            <person name="Espley R.V."/>
            <person name="Ireland H.S."/>
            <person name="Wu R."/>
            <person name="Atkinson R.G."/>
            <person name="Karunairetnam S."/>
            <person name="Bulley S."/>
            <person name="Chunkath S."/>
            <person name="Hanley Z."/>
            <person name="Storey R."/>
            <person name="Thrimawithana A.H."/>
            <person name="Thomson S."/>
            <person name="David C."/>
            <person name="Testolin R."/>
            <person name="Huang H."/>
            <person name="Hellens R.P."/>
            <person name="Schaffer R.J."/>
        </authorList>
    </citation>
    <scope>NUCLEOTIDE SEQUENCE [LARGE SCALE GENOMIC DNA]</scope>
    <source>
        <strain>cv. Red5</strain>
    </source>
</reference>
<protein>
    <recommendedName>
        <fullName>3-dehydroquinate synthase, chloroplastic</fullName>
        <ecNumber>4.2.3.4</ecNumber>
    </recommendedName>
</protein>
<proteinExistence type="evidence at protein level"/>
<sequence length="445" mass="48145">MAAFSLSAKQILSPSTHRPSLSKTTTADSSLRFRNPHSLSLRCSSLSSSSNVGRTRLMRASASSTAPVMDTSPTKAVSSAPTIVDVDLGDRSYPIYIGSGLLDQPDLLQRHVHGKRVLVVTNSTVAPIYLDKVVGALTNGNPNVSVESVILPDGEKYKNMDTLMKVFDKAIESRLDRRCTFVALGGGVIGDMCGYAAASFLRGVNFIQIPTTVMAQVDSSVGGKTGINHRLGKNLIGAFYQPQCVLIDTDTLNTLPDRELASGLAEVVKYGLIRDANFFEWQEKNMPALMARDPSALAYAIKRSCENKAEVVSLDEKESGLRATLNLGHTFGHAIETGFGYGQWLHGEAVAAGMVMAVDMSYRLGWIDESIVNRAHNILQQAKLPTAPPETMTVEMFKSVMAVDKKVADGLLRLILLKGPLGNCVFTGDYDRKALDETLHAFCKS</sequence>
<feature type="transit peptide" description="Chloroplast" evidence="2">
    <location>
        <begin position="1"/>
        <end position="68"/>
    </location>
</feature>
<feature type="chain" id="PRO_0000425861" description="3-dehydroquinate synthase, chloroplastic">
    <location>
        <begin position="69"/>
        <end position="445"/>
    </location>
</feature>
<feature type="binding site" evidence="3 6">
    <location>
        <position position="122"/>
    </location>
    <ligand>
        <name>NAD(+)</name>
        <dbReference type="ChEBI" id="CHEBI:57540"/>
    </ligand>
</feature>
<feature type="binding site" evidence="3 6">
    <location>
        <begin position="153"/>
        <end position="155"/>
    </location>
    <ligand>
        <name>NAD(+)</name>
        <dbReference type="ChEBI" id="CHEBI:57540"/>
    </ligand>
</feature>
<feature type="binding site" evidence="3 6">
    <location>
        <position position="158"/>
    </location>
    <ligand>
        <name>NAD(+)</name>
        <dbReference type="ChEBI" id="CHEBI:57540"/>
    </ligand>
</feature>
<feature type="binding site" evidence="3 6">
    <location>
        <begin position="186"/>
        <end position="191"/>
    </location>
    <ligand>
        <name>NAD(+)</name>
        <dbReference type="ChEBI" id="CHEBI:57540"/>
    </ligand>
</feature>
<feature type="binding site" evidence="3 6">
    <location>
        <begin position="211"/>
        <end position="212"/>
    </location>
    <ligand>
        <name>NAD(+)</name>
        <dbReference type="ChEBI" id="CHEBI:57540"/>
    </ligand>
</feature>
<feature type="binding site" evidence="3">
    <location>
        <position position="224"/>
    </location>
    <ligand>
        <name>NAD(+)</name>
        <dbReference type="ChEBI" id="CHEBI:57540"/>
    </ligand>
</feature>
<feature type="binding site" evidence="3 6">
    <location>
        <position position="233"/>
    </location>
    <ligand>
        <name>NAD(+)</name>
        <dbReference type="ChEBI" id="CHEBI:57540"/>
    </ligand>
</feature>
<feature type="binding site" evidence="3 6">
    <location>
        <begin position="251"/>
        <end position="254"/>
    </location>
    <ligand>
        <name>NAD(+)</name>
        <dbReference type="ChEBI" id="CHEBI:57540"/>
    </ligand>
</feature>
<feature type="binding site" evidence="1">
    <location>
        <position position="266"/>
    </location>
    <ligand>
        <name>a divalent metal cation</name>
        <dbReference type="ChEBI" id="CHEBI:60240"/>
    </ligand>
</feature>
<feature type="binding site" evidence="3 6">
    <location>
        <position position="308"/>
    </location>
    <ligand>
        <name>NAD(+)</name>
        <dbReference type="ChEBI" id="CHEBI:57540"/>
    </ligand>
</feature>
<feature type="binding site" evidence="1">
    <location>
        <position position="329"/>
    </location>
    <ligand>
        <name>a divalent metal cation</name>
        <dbReference type="ChEBI" id="CHEBI:60240"/>
    </ligand>
</feature>
<feature type="binding site" evidence="1">
    <location>
        <position position="346"/>
    </location>
    <ligand>
        <name>a divalent metal cation</name>
        <dbReference type="ChEBI" id="CHEBI:60240"/>
    </ligand>
</feature>
<feature type="sequence conflict" description="In Ref. 1." ref="1">
    <original>H</original>
    <variation>P</variation>
    <location>
        <position position="17"/>
    </location>
</feature>
<feature type="sequence conflict" description="In Ref. 1." ref="1">
    <original>T</original>
    <variation>S</variation>
    <location>
        <position position="24"/>
    </location>
</feature>
<feature type="sequence conflict" description="In Ref. 1." ref="1">
    <original>HSLSLRC</original>
    <variation>PTLSLRR</variation>
    <location>
        <begin position="37"/>
        <end position="43"/>
    </location>
</feature>
<feature type="sequence conflict" description="In Ref. 1." ref="1">
    <original>MRA</original>
    <variation>LSS</variation>
    <location>
        <begin position="58"/>
        <end position="60"/>
    </location>
</feature>
<feature type="sequence conflict" description="In Ref. 1." ref="1">
    <original>G</original>
    <variation>E</variation>
    <location>
        <position position="140"/>
    </location>
</feature>
<feature type="strand" evidence="7">
    <location>
        <begin position="82"/>
        <end position="86"/>
    </location>
</feature>
<feature type="helix" evidence="7">
    <location>
        <begin position="89"/>
        <end position="91"/>
    </location>
</feature>
<feature type="strand" evidence="7">
    <location>
        <begin position="93"/>
        <end position="100"/>
    </location>
</feature>
<feature type="helix" evidence="7">
    <location>
        <begin position="101"/>
        <end position="103"/>
    </location>
</feature>
<feature type="helix" evidence="7">
    <location>
        <begin position="106"/>
        <end position="109"/>
    </location>
</feature>
<feature type="strand" evidence="7">
    <location>
        <begin position="114"/>
        <end position="122"/>
    </location>
</feature>
<feature type="turn" evidence="7">
    <location>
        <begin position="123"/>
        <end position="125"/>
    </location>
</feature>
<feature type="helix" evidence="7">
    <location>
        <begin position="126"/>
        <end position="138"/>
    </location>
</feature>
<feature type="strand" evidence="7">
    <location>
        <begin position="145"/>
        <end position="151"/>
    </location>
</feature>
<feature type="helix" evidence="7">
    <location>
        <begin position="155"/>
        <end position="157"/>
    </location>
</feature>
<feature type="helix" evidence="7">
    <location>
        <begin position="160"/>
        <end position="172"/>
    </location>
</feature>
<feature type="strand" evidence="7">
    <location>
        <begin position="180"/>
        <end position="186"/>
    </location>
</feature>
<feature type="helix" evidence="7">
    <location>
        <begin position="187"/>
        <end position="199"/>
    </location>
</feature>
<feature type="strand" evidence="7">
    <location>
        <begin position="205"/>
        <end position="210"/>
    </location>
</feature>
<feature type="helix" evidence="7">
    <location>
        <begin position="213"/>
        <end position="217"/>
    </location>
</feature>
<feature type="turn" evidence="7">
    <location>
        <begin position="218"/>
        <end position="220"/>
    </location>
</feature>
<feature type="strand" evidence="7">
    <location>
        <begin position="224"/>
        <end position="229"/>
    </location>
</feature>
<feature type="strand" evidence="7">
    <location>
        <begin position="232"/>
        <end position="239"/>
    </location>
</feature>
<feature type="strand" evidence="7">
    <location>
        <begin position="245"/>
        <end position="248"/>
    </location>
</feature>
<feature type="helix" evidence="7">
    <location>
        <begin position="249"/>
        <end position="254"/>
    </location>
</feature>
<feature type="helix" evidence="7">
    <location>
        <begin position="257"/>
        <end position="274"/>
    </location>
</feature>
<feature type="helix" evidence="7">
    <location>
        <begin position="276"/>
        <end position="290"/>
    </location>
</feature>
<feature type="helix" evidence="7">
    <location>
        <begin position="294"/>
        <end position="314"/>
    </location>
</feature>
<feature type="helix" evidence="7">
    <location>
        <begin position="321"/>
        <end position="326"/>
    </location>
</feature>
<feature type="helix" evidence="7">
    <location>
        <begin position="329"/>
        <end position="338"/>
    </location>
</feature>
<feature type="helix" evidence="7">
    <location>
        <begin position="346"/>
        <end position="363"/>
    </location>
</feature>
<feature type="helix" evidence="7">
    <location>
        <begin position="369"/>
        <end position="381"/>
    </location>
</feature>
<feature type="helix" evidence="7">
    <location>
        <begin position="394"/>
        <end position="401"/>
    </location>
</feature>
<feature type="strand" evidence="7">
    <location>
        <begin position="414"/>
        <end position="417"/>
    </location>
</feature>
<feature type="strand" evidence="7">
    <location>
        <begin position="424"/>
        <end position="428"/>
    </location>
</feature>
<feature type="helix" evidence="7">
    <location>
        <begin position="432"/>
        <end position="442"/>
    </location>
</feature>